<reference key="1">
    <citation type="submission" date="2002-12" db="EMBL/GenBank/DDBJ databases">
        <title>AtPEX11 and peroxisome proliferation in Arabidopsis thaliana.</title>
        <authorList>
            <person name="El Shami M."/>
            <person name="Baker A."/>
        </authorList>
    </citation>
    <scope>NUCLEOTIDE SEQUENCE [MRNA]</scope>
    <source>
        <tissue>Seedling</tissue>
    </source>
</reference>
<reference key="2">
    <citation type="journal article" date="2000" name="Nature">
        <title>Sequence and analysis of chromosome 3 of the plant Arabidopsis thaliana.</title>
        <authorList>
            <person name="Salanoubat M."/>
            <person name="Lemcke K."/>
            <person name="Rieger M."/>
            <person name="Ansorge W."/>
            <person name="Unseld M."/>
            <person name="Fartmann B."/>
            <person name="Valle G."/>
            <person name="Bloecker H."/>
            <person name="Perez-Alonso M."/>
            <person name="Obermaier B."/>
            <person name="Delseny M."/>
            <person name="Boutry M."/>
            <person name="Grivell L.A."/>
            <person name="Mache R."/>
            <person name="Puigdomenech P."/>
            <person name="De Simone V."/>
            <person name="Choisne N."/>
            <person name="Artiguenave F."/>
            <person name="Robert C."/>
            <person name="Brottier P."/>
            <person name="Wincker P."/>
            <person name="Cattolico L."/>
            <person name="Weissenbach J."/>
            <person name="Saurin W."/>
            <person name="Quetier F."/>
            <person name="Schaefer M."/>
            <person name="Mueller-Auer S."/>
            <person name="Gabel C."/>
            <person name="Fuchs M."/>
            <person name="Benes V."/>
            <person name="Wurmbach E."/>
            <person name="Drzonek H."/>
            <person name="Erfle H."/>
            <person name="Jordan N."/>
            <person name="Bangert S."/>
            <person name="Wiedelmann R."/>
            <person name="Kranz H."/>
            <person name="Voss H."/>
            <person name="Holland R."/>
            <person name="Brandt P."/>
            <person name="Nyakatura G."/>
            <person name="Vezzi A."/>
            <person name="D'Angelo M."/>
            <person name="Pallavicini A."/>
            <person name="Toppo S."/>
            <person name="Simionati B."/>
            <person name="Conrad A."/>
            <person name="Hornischer K."/>
            <person name="Kauer G."/>
            <person name="Loehnert T.-H."/>
            <person name="Nordsiek G."/>
            <person name="Reichelt J."/>
            <person name="Scharfe M."/>
            <person name="Schoen O."/>
            <person name="Bargues M."/>
            <person name="Terol J."/>
            <person name="Climent J."/>
            <person name="Navarro P."/>
            <person name="Collado C."/>
            <person name="Perez-Perez A."/>
            <person name="Ottenwaelder B."/>
            <person name="Duchemin D."/>
            <person name="Cooke R."/>
            <person name="Laudie M."/>
            <person name="Berger-Llauro C."/>
            <person name="Purnelle B."/>
            <person name="Masuy D."/>
            <person name="de Haan M."/>
            <person name="Maarse A.C."/>
            <person name="Alcaraz J.-P."/>
            <person name="Cottet A."/>
            <person name="Casacuberta E."/>
            <person name="Monfort A."/>
            <person name="Argiriou A."/>
            <person name="Flores M."/>
            <person name="Liguori R."/>
            <person name="Vitale D."/>
            <person name="Mannhaupt G."/>
            <person name="Haase D."/>
            <person name="Schoof H."/>
            <person name="Rudd S."/>
            <person name="Zaccaria P."/>
            <person name="Mewes H.-W."/>
            <person name="Mayer K.F.X."/>
            <person name="Kaul S."/>
            <person name="Town C.D."/>
            <person name="Koo H.L."/>
            <person name="Tallon L.J."/>
            <person name="Jenkins J."/>
            <person name="Rooney T."/>
            <person name="Rizzo M."/>
            <person name="Walts A."/>
            <person name="Utterback T."/>
            <person name="Fujii C.Y."/>
            <person name="Shea T.P."/>
            <person name="Creasy T.H."/>
            <person name="Haas B."/>
            <person name="Maiti R."/>
            <person name="Wu D."/>
            <person name="Peterson J."/>
            <person name="Van Aken S."/>
            <person name="Pai G."/>
            <person name="Militscher J."/>
            <person name="Sellers P."/>
            <person name="Gill J.E."/>
            <person name="Feldblyum T.V."/>
            <person name="Preuss D."/>
            <person name="Lin X."/>
            <person name="Nierman W.C."/>
            <person name="Salzberg S.L."/>
            <person name="White O."/>
            <person name="Venter J.C."/>
            <person name="Fraser C.M."/>
            <person name="Kaneko T."/>
            <person name="Nakamura Y."/>
            <person name="Sato S."/>
            <person name="Kato T."/>
            <person name="Asamizu E."/>
            <person name="Sasamoto S."/>
            <person name="Kimura T."/>
            <person name="Idesawa K."/>
            <person name="Kawashima K."/>
            <person name="Kishida Y."/>
            <person name="Kiyokawa C."/>
            <person name="Kohara M."/>
            <person name="Matsumoto M."/>
            <person name="Matsuno A."/>
            <person name="Muraki A."/>
            <person name="Nakayama S."/>
            <person name="Nakazaki N."/>
            <person name="Shinpo S."/>
            <person name="Takeuchi C."/>
            <person name="Wada T."/>
            <person name="Watanabe A."/>
            <person name="Yamada M."/>
            <person name="Yasuda M."/>
            <person name="Tabata S."/>
        </authorList>
    </citation>
    <scope>NUCLEOTIDE SEQUENCE [LARGE SCALE GENOMIC DNA]</scope>
    <source>
        <strain>cv. Columbia</strain>
    </source>
</reference>
<reference key="3">
    <citation type="journal article" date="2017" name="Plant J.">
        <title>Araport11: a complete reannotation of the Arabidopsis thaliana reference genome.</title>
        <authorList>
            <person name="Cheng C.Y."/>
            <person name="Krishnakumar V."/>
            <person name="Chan A.P."/>
            <person name="Thibaud-Nissen F."/>
            <person name="Schobel S."/>
            <person name="Town C.D."/>
        </authorList>
    </citation>
    <scope>GENOME REANNOTATION</scope>
    <source>
        <strain>cv. Columbia</strain>
    </source>
</reference>
<reference key="4">
    <citation type="journal article" date="2003" name="Science">
        <title>Empirical analysis of transcriptional activity in the Arabidopsis genome.</title>
        <authorList>
            <person name="Yamada K."/>
            <person name="Lim J."/>
            <person name="Dale J.M."/>
            <person name="Chen H."/>
            <person name="Shinn P."/>
            <person name="Palm C.J."/>
            <person name="Southwick A.M."/>
            <person name="Wu H.C."/>
            <person name="Kim C.J."/>
            <person name="Nguyen M."/>
            <person name="Pham P.K."/>
            <person name="Cheuk R.F."/>
            <person name="Karlin-Newmann G."/>
            <person name="Liu S.X."/>
            <person name="Lam B."/>
            <person name="Sakano H."/>
            <person name="Wu T."/>
            <person name="Yu G."/>
            <person name="Miranda M."/>
            <person name="Quach H.L."/>
            <person name="Tripp M."/>
            <person name="Chang C.H."/>
            <person name="Lee J.M."/>
            <person name="Toriumi M.J."/>
            <person name="Chan M.M."/>
            <person name="Tang C.C."/>
            <person name="Onodera C.S."/>
            <person name="Deng J.M."/>
            <person name="Akiyama K."/>
            <person name="Ansari Y."/>
            <person name="Arakawa T."/>
            <person name="Banh J."/>
            <person name="Banno F."/>
            <person name="Bowser L."/>
            <person name="Brooks S.Y."/>
            <person name="Carninci P."/>
            <person name="Chao Q."/>
            <person name="Choy N."/>
            <person name="Enju A."/>
            <person name="Goldsmith A.D."/>
            <person name="Gurjal M."/>
            <person name="Hansen N.F."/>
            <person name="Hayashizaki Y."/>
            <person name="Johnson-Hopson C."/>
            <person name="Hsuan V.W."/>
            <person name="Iida K."/>
            <person name="Karnes M."/>
            <person name="Khan S."/>
            <person name="Koesema E."/>
            <person name="Ishida J."/>
            <person name="Jiang P.X."/>
            <person name="Jones T."/>
            <person name="Kawai J."/>
            <person name="Kamiya A."/>
            <person name="Meyers C."/>
            <person name="Nakajima M."/>
            <person name="Narusaka M."/>
            <person name="Seki M."/>
            <person name="Sakurai T."/>
            <person name="Satou M."/>
            <person name="Tamse R."/>
            <person name="Vaysberg M."/>
            <person name="Wallender E.K."/>
            <person name="Wong C."/>
            <person name="Yamamura Y."/>
            <person name="Yuan S."/>
            <person name="Shinozaki K."/>
            <person name="Davis R.W."/>
            <person name="Theologis A."/>
            <person name="Ecker J.R."/>
        </authorList>
    </citation>
    <scope>NUCLEOTIDE SEQUENCE [LARGE SCALE MRNA]</scope>
    <source>
        <strain>cv. Columbia</strain>
    </source>
</reference>
<reference key="5">
    <citation type="journal article" date="2006" name="J. Cell Sci.">
        <title>Five Arabidopsis peroxin 11 homologs individually promote peroxisome elongation, duplication or aggregation.</title>
        <authorList>
            <person name="Lingard M.J."/>
            <person name="Trelease R.N."/>
        </authorList>
    </citation>
    <scope>FUNCTION</scope>
    <scope>TOPOLOGY</scope>
    <scope>TISSUE SPECIFICITY</scope>
    <scope>NOMENCLATURE</scope>
</reference>
<reference key="6">
    <citation type="journal article" date="2007" name="Plant Cell">
        <title>The PEROXIN11 protein family controls peroxisome proliferation in Arabidopsis.</title>
        <authorList>
            <person name="Orth T."/>
            <person name="Reumann S."/>
            <person name="Zhang X."/>
            <person name="Fan J."/>
            <person name="Wenzel D."/>
            <person name="Quan S."/>
            <person name="Hu J."/>
        </authorList>
    </citation>
    <scope>FUNCTION</scope>
    <scope>SUBCELLULAR LOCATION</scope>
    <scope>TISSUE SPECIFICITY</scope>
    <scope>INDUCTION</scope>
    <scope>GENE FAMILY</scope>
</reference>
<reference key="7">
    <citation type="journal article" date="2008" name="Plant Cell">
        <title>Arabidopsis PEROXIN11c-e, FISSION1b, and DYNAMIN-RELATED PROTEIN3A cooperate in cell cycle-associated replication of peroxisomes.</title>
        <authorList>
            <person name="Lingard M.J."/>
            <person name="Gidda S.K."/>
            <person name="Bingham S."/>
            <person name="Rothstein S.J."/>
            <person name="Mullen R.T."/>
            <person name="Trelease R.N."/>
        </authorList>
    </citation>
    <scope>SUBUNIT</scope>
    <scope>INTERACTION WITH FIS1B</scope>
</reference>
<reference key="8">
    <citation type="journal article" date="2010" name="Plant Cell">
        <title>The Arabidopsis chloroplast division protein DYNAMIN-RELATED PROTEIN5B also mediates peroxisome division.</title>
        <authorList>
            <person name="Zhang X."/>
            <person name="Hu J."/>
        </authorList>
    </citation>
    <scope>INTERACTION WITH ARC5 AND FIS1B</scope>
    <scope>SUBCELLULAR LOCATION</scope>
    <scope>SELF-INTERACTION</scope>
</reference>
<feature type="chain" id="PRO_0000330296" description="Peroxisomal membrane protein 11B">
    <location>
        <begin position="1"/>
        <end position="227"/>
    </location>
</feature>
<feature type="topological domain" description="Cytoplasmic" evidence="2">
    <location>
        <begin position="1"/>
        <end position="85"/>
    </location>
</feature>
<feature type="transmembrane region" description="Helical" evidence="1">
    <location>
        <begin position="86"/>
        <end position="106"/>
    </location>
</feature>
<feature type="topological domain" description="Lumenal" evidence="2">
    <location>
        <begin position="107"/>
        <end position="201"/>
    </location>
</feature>
<feature type="transmembrane region" description="Helical" evidence="1">
    <location>
        <begin position="202"/>
        <end position="222"/>
    </location>
</feature>
<feature type="topological domain" description="Cytoplasmic" evidence="2">
    <location>
        <begin position="223"/>
        <end position="227"/>
    </location>
</feature>
<evidence type="ECO:0000255" key="1"/>
<evidence type="ECO:0000269" key="2">
    <source>
    </source>
</evidence>
<evidence type="ECO:0000269" key="3">
    <source>
    </source>
</evidence>
<evidence type="ECO:0000269" key="4">
    <source>
    </source>
</evidence>
<evidence type="ECO:0000269" key="5">
    <source>
    </source>
</evidence>
<evidence type="ECO:0000305" key="6"/>
<name>PX11B_ARATH</name>
<comment type="function">
    <text evidence="2 3">Involved in peroxisomal proliferation. Promotes peroxisomal duplication, aggregation or elongation without fission.</text>
</comment>
<comment type="subunit">
    <text evidence="4 5">Homooligomer. Interacts with ARC5 and FIS1B on peroxisomes.</text>
</comment>
<comment type="subcellular location">
    <subcellularLocation>
        <location evidence="3 5">Peroxisome membrane</location>
        <topology evidence="3 5">Multi-pass membrane protein</topology>
    </subcellularLocation>
</comment>
<comment type="tissue specificity">
    <text evidence="2 3">Expressed in roots, leaves and developing siliques.</text>
</comment>
<comment type="induction">
    <text evidence="3">In seedlings by transition from dark to light. Up-regulated during senescence.</text>
</comment>
<comment type="similarity">
    <text evidence="6">Belongs to the peroxin-11 family.</text>
</comment>
<protein>
    <recommendedName>
        <fullName>Peroxisomal membrane protein 11B</fullName>
    </recommendedName>
    <alternativeName>
        <fullName>Peroxin-11B</fullName>
        <shortName>AtPEX11b</shortName>
    </alternativeName>
</protein>
<gene>
    <name type="primary">PEX11B</name>
    <name type="synonym">PEX11-4</name>
    <name type="ordered locus">At3g47430</name>
    <name type="ORF">T21L8.180</name>
</gene>
<dbReference type="EMBL" id="AJ520107">
    <property type="protein sequence ID" value="CAD58678.1"/>
    <property type="molecule type" value="mRNA"/>
</dbReference>
<dbReference type="EMBL" id="AL096860">
    <property type="protein sequence ID" value="CAB51215.1"/>
    <property type="molecule type" value="Genomic_DNA"/>
</dbReference>
<dbReference type="EMBL" id="CP002686">
    <property type="protein sequence ID" value="AEE78280.1"/>
    <property type="molecule type" value="Genomic_DNA"/>
</dbReference>
<dbReference type="EMBL" id="BT002033">
    <property type="protein sequence ID" value="AAN72044.1"/>
    <property type="molecule type" value="mRNA"/>
</dbReference>
<dbReference type="EMBL" id="BT006271">
    <property type="protein sequence ID" value="AAP13379.1"/>
    <property type="molecule type" value="mRNA"/>
</dbReference>
<dbReference type="PIR" id="T12998">
    <property type="entry name" value="T12998"/>
</dbReference>
<dbReference type="RefSeq" id="NP_190327.1">
    <property type="nucleotide sequence ID" value="NM_114611.4"/>
</dbReference>
<dbReference type="SMR" id="Q9STY0"/>
<dbReference type="BioGRID" id="9217">
    <property type="interactions" value="5"/>
</dbReference>
<dbReference type="FunCoup" id="Q9STY0">
    <property type="interactions" value="418"/>
</dbReference>
<dbReference type="IntAct" id="Q9STY0">
    <property type="interactions" value="4"/>
</dbReference>
<dbReference type="STRING" id="3702.Q9STY0"/>
<dbReference type="GlyGen" id="Q9STY0">
    <property type="glycosylation" value="1 site"/>
</dbReference>
<dbReference type="iPTMnet" id="Q9STY0"/>
<dbReference type="PaxDb" id="3702-AT3G47430.1"/>
<dbReference type="ProteomicsDB" id="226134"/>
<dbReference type="EnsemblPlants" id="AT3G47430.1">
    <property type="protein sequence ID" value="AT3G47430.1"/>
    <property type="gene ID" value="AT3G47430"/>
</dbReference>
<dbReference type="GeneID" id="823897"/>
<dbReference type="Gramene" id="AT3G47430.1">
    <property type="protein sequence ID" value="AT3G47430.1"/>
    <property type="gene ID" value="AT3G47430"/>
</dbReference>
<dbReference type="KEGG" id="ath:AT3G47430"/>
<dbReference type="Araport" id="AT3G47430"/>
<dbReference type="TAIR" id="AT3G47430">
    <property type="gene designation" value="PEX11B"/>
</dbReference>
<dbReference type="eggNOG" id="KOG4186">
    <property type="taxonomic scope" value="Eukaryota"/>
</dbReference>
<dbReference type="HOGENOM" id="CLU_080291_0_0_1"/>
<dbReference type="InParanoid" id="Q9STY0"/>
<dbReference type="OMA" id="LVHWHVE"/>
<dbReference type="PhylomeDB" id="Q9STY0"/>
<dbReference type="PRO" id="PR:Q9STY0"/>
<dbReference type="Proteomes" id="UP000006548">
    <property type="component" value="Chromosome 3"/>
</dbReference>
<dbReference type="ExpressionAtlas" id="Q9STY0">
    <property type="expression patterns" value="baseline and differential"/>
</dbReference>
<dbReference type="GO" id="GO:0005829">
    <property type="term" value="C:cytosol"/>
    <property type="evidence" value="ECO:0007005"/>
    <property type="project" value="TAIR"/>
</dbReference>
<dbReference type="GO" id="GO:0005778">
    <property type="term" value="C:peroxisomal membrane"/>
    <property type="evidence" value="ECO:0000314"/>
    <property type="project" value="TAIR"/>
</dbReference>
<dbReference type="GO" id="GO:0005777">
    <property type="term" value="C:peroxisome"/>
    <property type="evidence" value="ECO:0000314"/>
    <property type="project" value="UniProtKB"/>
</dbReference>
<dbReference type="GO" id="GO:0042802">
    <property type="term" value="F:identical protein binding"/>
    <property type="evidence" value="ECO:0000314"/>
    <property type="project" value="UniProtKB"/>
</dbReference>
<dbReference type="GO" id="GO:0016559">
    <property type="term" value="P:peroxisome fission"/>
    <property type="evidence" value="ECO:0000314"/>
    <property type="project" value="UniProtKB"/>
</dbReference>
<dbReference type="GO" id="GO:0007031">
    <property type="term" value="P:peroxisome organization"/>
    <property type="evidence" value="ECO:0000315"/>
    <property type="project" value="TAIR"/>
</dbReference>
<dbReference type="GO" id="GO:0044375">
    <property type="term" value="P:regulation of peroxisome size"/>
    <property type="evidence" value="ECO:0000314"/>
    <property type="project" value="UniProtKB"/>
</dbReference>
<dbReference type="InterPro" id="IPR008733">
    <property type="entry name" value="PEX11"/>
</dbReference>
<dbReference type="PANTHER" id="PTHR12652">
    <property type="entry name" value="PEROXISOMAL BIOGENESIS FACTOR 11"/>
    <property type="match status" value="1"/>
</dbReference>
<dbReference type="PANTHER" id="PTHR12652:SF17">
    <property type="entry name" value="PEROXISOMAL MEMBRANE PROTEIN 11B"/>
    <property type="match status" value="1"/>
</dbReference>
<dbReference type="Pfam" id="PF05648">
    <property type="entry name" value="PEX11"/>
    <property type="match status" value="1"/>
</dbReference>
<proteinExistence type="evidence at protein level"/>
<accession>Q9STY0</accession>
<organism>
    <name type="scientific">Arabidopsis thaliana</name>
    <name type="common">Mouse-ear cress</name>
    <dbReference type="NCBI Taxonomy" id="3702"/>
    <lineage>
        <taxon>Eukaryota</taxon>
        <taxon>Viridiplantae</taxon>
        <taxon>Streptophyta</taxon>
        <taxon>Embryophyta</taxon>
        <taxon>Tracheophyta</taxon>
        <taxon>Spermatophyta</taxon>
        <taxon>Magnoliopsida</taxon>
        <taxon>eudicotyledons</taxon>
        <taxon>Gunneridae</taxon>
        <taxon>Pentapetalae</taxon>
        <taxon>rosids</taxon>
        <taxon>malvids</taxon>
        <taxon>Brassicales</taxon>
        <taxon>Brassicaceae</taxon>
        <taxon>Camelineae</taxon>
        <taxon>Arabidopsis</taxon>
    </lineage>
</organism>
<sequence length="227" mass="25598">MSLDTVDKLVVFLAKRDGIDKLVKTFQYVAKLACWHVEATRPEAADRFKKWEVASGLSRKAFRTGRSLTGFNALRRNPGATPMIRFLAVLANSGEMVYFFFDHFLWLSRIGSIDAKLAKKMSFISAFGESFGYTFFIIIDCIFIKQRLKSLKKLQHSTDEPKEEIGAKISEIRGDIVMRLMGISANVADLLIALAEIHPNPFCNHTITLGISGLVSAWAGWYRNWPS</sequence>
<keyword id="KW-0472">Membrane</keyword>
<keyword id="KW-0576">Peroxisome</keyword>
<keyword id="KW-0962">Peroxisome biogenesis</keyword>
<keyword id="KW-1185">Reference proteome</keyword>
<keyword id="KW-0812">Transmembrane</keyword>
<keyword id="KW-1133">Transmembrane helix</keyword>